<gene>
    <name type="primary">lktA</name>
</gene>
<dbReference type="EMBL" id="U01215">
    <property type="protein sequence ID" value="AAB36689.1"/>
    <property type="molecule type" value="Unassigned_DNA"/>
</dbReference>
<dbReference type="SMR" id="P55118"/>
<dbReference type="GO" id="GO:0005576">
    <property type="term" value="C:extracellular region"/>
    <property type="evidence" value="ECO:0007669"/>
    <property type="project" value="UniProtKB-SubCell"/>
</dbReference>
<dbReference type="GO" id="GO:0020002">
    <property type="term" value="C:host cell plasma membrane"/>
    <property type="evidence" value="ECO:0007669"/>
    <property type="project" value="UniProtKB-SubCell"/>
</dbReference>
<dbReference type="GO" id="GO:0016020">
    <property type="term" value="C:membrane"/>
    <property type="evidence" value="ECO:0007669"/>
    <property type="project" value="UniProtKB-KW"/>
</dbReference>
<dbReference type="GO" id="GO:0005509">
    <property type="term" value="F:calcium ion binding"/>
    <property type="evidence" value="ECO:0007669"/>
    <property type="project" value="InterPro"/>
</dbReference>
<dbReference type="GO" id="GO:0015267">
    <property type="term" value="F:channel activity"/>
    <property type="evidence" value="ECO:0007669"/>
    <property type="project" value="InterPro"/>
</dbReference>
<dbReference type="GO" id="GO:0090729">
    <property type="term" value="F:toxin activity"/>
    <property type="evidence" value="ECO:0007669"/>
    <property type="project" value="UniProtKB-KW"/>
</dbReference>
<dbReference type="GO" id="GO:0031640">
    <property type="term" value="P:killing of cells of another organism"/>
    <property type="evidence" value="ECO:0007669"/>
    <property type="project" value="UniProtKB-KW"/>
</dbReference>
<dbReference type="FunFam" id="2.150.10.10:FF:000002">
    <property type="entry name" value="Leukotoxin"/>
    <property type="match status" value="1"/>
</dbReference>
<dbReference type="Gene3D" id="2.150.10.10">
    <property type="entry name" value="Serralysin-like metalloprotease, C-terminal"/>
    <property type="match status" value="1"/>
</dbReference>
<dbReference type="InterPro" id="IPR018511">
    <property type="entry name" value="Hemolysin-typ_Ca-bd_CS"/>
</dbReference>
<dbReference type="InterPro" id="IPR001343">
    <property type="entry name" value="Hemolysn_Ca-bd"/>
</dbReference>
<dbReference type="InterPro" id="IPR013550">
    <property type="entry name" value="RTX_C"/>
</dbReference>
<dbReference type="InterPro" id="IPR018504">
    <property type="entry name" value="RTX_pore_form"/>
</dbReference>
<dbReference type="InterPro" id="IPR050557">
    <property type="entry name" value="RTX_toxin/Mannuronan_C5-epim"/>
</dbReference>
<dbReference type="InterPro" id="IPR003995">
    <property type="entry name" value="RTX_toxin_determinant-A"/>
</dbReference>
<dbReference type="InterPro" id="IPR011049">
    <property type="entry name" value="Serralysin-like_metalloprot_C"/>
</dbReference>
<dbReference type="NCBIfam" id="NF033943">
    <property type="entry name" value="RTX_toxin"/>
    <property type="match status" value="1"/>
</dbReference>
<dbReference type="PANTHER" id="PTHR38340">
    <property type="entry name" value="S-LAYER PROTEIN"/>
    <property type="match status" value="1"/>
</dbReference>
<dbReference type="PANTHER" id="PTHR38340:SF1">
    <property type="entry name" value="S-LAYER PROTEIN"/>
    <property type="match status" value="1"/>
</dbReference>
<dbReference type="Pfam" id="PF00353">
    <property type="entry name" value="HemolysinCabind"/>
    <property type="match status" value="3"/>
</dbReference>
<dbReference type="Pfam" id="PF02382">
    <property type="entry name" value="RTX"/>
    <property type="match status" value="1"/>
</dbReference>
<dbReference type="Pfam" id="PF08339">
    <property type="entry name" value="RTX_C"/>
    <property type="match status" value="1"/>
</dbReference>
<dbReference type="PRINTS" id="PR00313">
    <property type="entry name" value="CABNDNGRPT"/>
</dbReference>
<dbReference type="PRINTS" id="PR01488">
    <property type="entry name" value="RTXTOXINA"/>
</dbReference>
<dbReference type="SUPFAM" id="SSF51120">
    <property type="entry name" value="beta-Roll"/>
    <property type="match status" value="1"/>
</dbReference>
<dbReference type="PROSITE" id="PS00330">
    <property type="entry name" value="HEMOLYSIN_CALCIUM"/>
    <property type="match status" value="4"/>
</dbReference>
<proteinExistence type="inferred from homology"/>
<comment type="function">
    <text evidence="1">Pasteurella leukotoxins are exotoxins that attack host leukocytes and especially polymorphonuclear cells, by causing cell rupture. The leukotoxin binds to the host LFA-1 integrin and induces a signaling cascade leading to many biological effects, including tyrosine phosphorylation of the CD18 tail, elevation of the intracellular Ca(2+) and lysis of the host cell (By similarity). This leukotoxin is a major contributor to the pathogenesis of lung injury in ovine pneumonic pasteurellosis. It also has weak hemolytic activity.</text>
</comment>
<comment type="subcellular location">
    <subcellularLocation>
        <location evidence="1">Secreted</location>
    </subcellularLocation>
    <subcellularLocation>
        <location evidence="1">Host cell membrane</location>
        <topology evidence="1">Multi-pass membrane protein</topology>
    </subcellularLocation>
</comment>
<comment type="domain">
    <text evidence="1">The transmembrane domains are believed to be involved in pore formation in target cells.</text>
</comment>
<comment type="domain">
    <text evidence="1">The Gly-rich region is probably involved in calcium binding, which is required for target cell-binding and cytolytic activity.</text>
</comment>
<comment type="domain">
    <text evidence="1">The C-terminal domain contains an export signal that is recognized by the ABC transporter complex LktBD.</text>
</comment>
<comment type="PTM">
    <text evidence="1">Acylated by LktC. The toxin only becomes active when modified (By similarity).</text>
</comment>
<comment type="miscellaneous">
    <text>The lktCABD operon has a complex mosaic structure that has been derived by extensive inter- and intraspecies horizontal DNA transfer and intragenic recombination events.</text>
</comment>
<comment type="similarity">
    <text evidence="3">Belongs to the RTX prokaryotic toxin (TC 1.C.11) family.</text>
</comment>
<organism>
    <name type="scientific">Mannheimia haemolytica</name>
    <name type="common">Pasteurella haemolytica</name>
    <dbReference type="NCBI Taxonomy" id="75985"/>
    <lineage>
        <taxon>Bacteria</taxon>
        <taxon>Pseudomonadati</taxon>
        <taxon>Pseudomonadota</taxon>
        <taxon>Gammaproteobacteria</taxon>
        <taxon>Pasteurellales</taxon>
        <taxon>Pasteurellaceae</taxon>
        <taxon>Mannheimia</taxon>
    </lineage>
</organism>
<reference key="1">
    <citation type="journal article" date="1993" name="Infect. Immun.">
        <title>Molecular analysis of the leukotoxin determinants from Pasteurella haemolytica serotypes 1 to 16.</title>
        <authorList>
            <person name="Burrows L.L."/>
            <person name="Olah-Winfield E."/>
            <person name="Lo R.Y.C."/>
        </authorList>
    </citation>
    <scope>NUCLEOTIDE SEQUENCE [GENOMIC DNA]</scope>
    <source>
        <strain>Serotype A11</strain>
    </source>
</reference>
<feature type="chain" id="PRO_0000196230" description="Leukotoxin">
    <location>
        <begin position="1"/>
        <end position="953"/>
    </location>
</feature>
<feature type="transmembrane region" description="Helical" evidence="2">
    <location>
        <begin position="230"/>
        <end position="250"/>
    </location>
</feature>
<feature type="transmembrane region" description="Helical" evidence="2">
    <location>
        <begin position="297"/>
        <end position="317"/>
    </location>
</feature>
<feature type="transmembrane region" description="Helical" evidence="2">
    <location>
        <begin position="381"/>
        <end position="401"/>
    </location>
</feature>
<feature type="repeat" description="Hemolysin-type calcium-binding 1">
    <location>
        <begin position="715"/>
        <end position="732"/>
    </location>
</feature>
<feature type="repeat" description="Hemolysin-type calcium-binding 2">
    <location>
        <begin position="733"/>
        <end position="750"/>
    </location>
</feature>
<feature type="repeat" description="Hemolysin-type calcium-binding 3">
    <location>
        <begin position="751"/>
        <end position="768"/>
    </location>
</feature>
<feature type="repeat" description="Hemolysin-type calcium-binding 4">
    <location>
        <begin position="769"/>
        <end position="786"/>
    </location>
</feature>
<feature type="repeat" description="Hemolysin-type calcium-binding 5">
    <location>
        <begin position="789"/>
        <end position="806"/>
    </location>
</feature>
<name>LKA11_MANHA</name>
<sequence>MGNKLTNISTNLKSSWLTAKSGLNRTGQSLAKAGQSLKTGAKKIILYIPKDYQYDTEKGNGLQDLVKAAEELGIEVQKEEGNDIAKAQTSLGTIQNVLGLTERGIVLSAPQLDKLLQKTKVGQAIGSAENLTKGFSNAKTVLSGIQSILGSVLAGMDLDEALQKNSNELTLAKAGLELTNSLIENIANSVKTLDAFGDQINQLGSKLQNVKGLSSLGDKLKGLSGFDKTSLGLDVVSGLLSGATAALVLADKNASTSRKVGAGFELANQVVGNITKAVSSYILAQRVAAGLSSTGPVAALIASTVSLAISPLAFAGIADKFNHAKSLESYAERFKKLGYDGDNLLAEYQRGTGTIDRSVTAINTALAAIAGGVSAAGRGSVIASPIALLVSGITGVISTILQYSKQAMFEHVANKIHNKIVEWEKNNHGKNYFENGYDARYLANLQDNMKFLLNLNKELQAERVIAITQQQWDNNIGDLAGISRLGEKVLSGKAYVDAFEEGKHLKADKLVQLDSANGIIDVSNSGKAKTQDILFRTPLLTPGTDDRERVQTGKYEYITKLNINRVDSWKITDGAASSTFDLTNVVQRIGIELDNAGNVTKTKETKIVAKLGAGDDNVFVGSGTTEIDGGEGYDRVHYSRGNYGALTIDATKETEQGSYTVNRFVETGKALHEGTSTHTALVGNREEKIEYRHSNNQHHAGYYTKDTLKAVEEIIGTSHNDIFKGSKFNDAFNGGDGVDTIDGKDGNDRLFGGKGDDIIDGGNGDDFIDGGKGNDLLHGGKGDDIFVHRQGDGNDIITDSDGNDKLSFSDSNLKDLTFEKVKHNLVITNSRKEKVTIQDWFREADFAKEVRNYKATKDEKIEEIIGQNGERITSKQVDDLIAKGNGKITQDELSKVVDNYELLKHSKNVTNSLDKLISSASAFTSSNDSRNVLVAPTSMLDQSLSSLQFARAA</sequence>
<evidence type="ECO:0000250" key="1"/>
<evidence type="ECO:0000255" key="2"/>
<evidence type="ECO:0000305" key="3"/>
<keyword id="KW-0106">Calcium</keyword>
<keyword id="KW-0204">Cytolysis</keyword>
<keyword id="KW-0354">Hemolysis</keyword>
<keyword id="KW-1032">Host cell membrane</keyword>
<keyword id="KW-1043">Host membrane</keyword>
<keyword id="KW-0449">Lipoprotein</keyword>
<keyword id="KW-0472">Membrane</keyword>
<keyword id="KW-0677">Repeat</keyword>
<keyword id="KW-0964">Secreted</keyword>
<keyword id="KW-0800">Toxin</keyword>
<keyword id="KW-0812">Transmembrane</keyword>
<keyword id="KW-1133">Transmembrane helix</keyword>
<keyword id="KW-0843">Virulence</keyword>
<protein>
    <recommendedName>
        <fullName>Leukotoxin</fullName>
        <shortName>Lkt</shortName>
    </recommendedName>
</protein>
<accession>P55118</accession>